<evidence type="ECO:0000250" key="1">
    <source>
        <dbReference type="UniProtKB" id="P0AFQ7"/>
    </source>
</evidence>
<evidence type="ECO:0000305" key="2"/>
<accession>Q89AG7</accession>
<comment type="cofactor">
    <cofactor evidence="1">
        <name>a divalent metal cation</name>
        <dbReference type="ChEBI" id="CHEBI:60240"/>
    </cofactor>
    <text evidence="1">Binds 2 divalent metal cations per subunit.</text>
</comment>
<comment type="similarity">
    <text evidence="2">Belongs to the metallo-dependent hydrolases superfamily. TatD-type hydrolase family.</text>
</comment>
<feature type="chain" id="PRO_0000202004" description="Uncharacterized metal-dependent hydrolase bbp_325">
    <location>
        <begin position="1"/>
        <end position="265"/>
    </location>
</feature>
<feature type="binding site" evidence="1">
    <location>
        <position position="7"/>
    </location>
    <ligand>
        <name>a divalent metal cation</name>
        <dbReference type="ChEBI" id="CHEBI:60240"/>
        <label>1</label>
    </ligand>
</feature>
<feature type="binding site" evidence="1">
    <location>
        <position position="9"/>
    </location>
    <ligand>
        <name>a divalent metal cation</name>
        <dbReference type="ChEBI" id="CHEBI:60240"/>
        <label>1</label>
    </ligand>
</feature>
<feature type="binding site" evidence="1">
    <location>
        <position position="95"/>
    </location>
    <ligand>
        <name>a divalent metal cation</name>
        <dbReference type="ChEBI" id="CHEBI:60240"/>
        <label>1</label>
    </ligand>
</feature>
<feature type="binding site" evidence="1">
    <location>
        <position position="95"/>
    </location>
    <ligand>
        <name>a divalent metal cation</name>
        <dbReference type="ChEBI" id="CHEBI:60240"/>
        <label>2</label>
    </ligand>
</feature>
<feature type="binding site" evidence="1">
    <location>
        <position position="131"/>
    </location>
    <ligand>
        <name>a divalent metal cation</name>
        <dbReference type="ChEBI" id="CHEBI:60240"/>
        <label>2</label>
    </ligand>
</feature>
<feature type="binding site" evidence="1">
    <location>
        <position position="156"/>
    </location>
    <ligand>
        <name>a divalent metal cation</name>
        <dbReference type="ChEBI" id="CHEBI:60240"/>
        <label>2</label>
    </ligand>
</feature>
<feature type="binding site" evidence="1">
    <location>
        <position position="206"/>
    </location>
    <ligand>
        <name>a divalent metal cation</name>
        <dbReference type="ChEBI" id="CHEBI:60240"/>
        <label>1</label>
    </ligand>
</feature>
<organism>
    <name type="scientific">Buchnera aphidicola subsp. Baizongia pistaciae (strain Bp)</name>
    <dbReference type="NCBI Taxonomy" id="224915"/>
    <lineage>
        <taxon>Bacteria</taxon>
        <taxon>Pseudomonadati</taxon>
        <taxon>Pseudomonadota</taxon>
        <taxon>Gammaproteobacteria</taxon>
        <taxon>Enterobacterales</taxon>
        <taxon>Erwiniaceae</taxon>
        <taxon>Buchnera</taxon>
    </lineage>
</organism>
<gene>
    <name type="ordered locus">bbp_325</name>
</gene>
<proteinExistence type="inferred from homology"/>
<name>Y325_BUCBP</name>
<reference key="1">
    <citation type="journal article" date="2003" name="Proc. Natl. Acad. Sci. U.S.A.">
        <title>Reductive genome evolution in Buchnera aphidicola.</title>
        <authorList>
            <person name="van Ham R.C.H.J."/>
            <person name="Kamerbeek J."/>
            <person name="Palacios C."/>
            <person name="Rausell C."/>
            <person name="Abascal F."/>
            <person name="Bastolla U."/>
            <person name="Fernandez J.M."/>
            <person name="Jimenez L."/>
            <person name="Postigo M."/>
            <person name="Silva F.J."/>
            <person name="Tamames J."/>
            <person name="Viguera E."/>
            <person name="Latorre A."/>
            <person name="Valencia A."/>
            <person name="Moran F."/>
            <person name="Moya A."/>
        </authorList>
    </citation>
    <scope>NUCLEOTIDE SEQUENCE [LARGE SCALE GENOMIC DNA]</scope>
    <source>
        <strain>Bp</strain>
    </source>
</reference>
<dbReference type="EC" id="3.1.-.-" evidence="2"/>
<dbReference type="EMBL" id="AE016826">
    <property type="protein sequence ID" value="AAO27047.1"/>
    <property type="molecule type" value="Genomic_DNA"/>
</dbReference>
<dbReference type="RefSeq" id="WP_011091448.1">
    <property type="nucleotide sequence ID" value="NC_004545.1"/>
</dbReference>
<dbReference type="SMR" id="Q89AG7"/>
<dbReference type="STRING" id="224915.bbp_325"/>
<dbReference type="KEGG" id="bab:bbp_325"/>
<dbReference type="eggNOG" id="COG0084">
    <property type="taxonomic scope" value="Bacteria"/>
</dbReference>
<dbReference type="HOGENOM" id="CLU_031506_4_0_6"/>
<dbReference type="OrthoDB" id="9810005at2"/>
<dbReference type="Proteomes" id="UP000000601">
    <property type="component" value="Chromosome"/>
</dbReference>
<dbReference type="GO" id="GO:0005829">
    <property type="term" value="C:cytosol"/>
    <property type="evidence" value="ECO:0007669"/>
    <property type="project" value="TreeGrafter"/>
</dbReference>
<dbReference type="GO" id="GO:0004536">
    <property type="term" value="F:DNA nuclease activity"/>
    <property type="evidence" value="ECO:0007669"/>
    <property type="project" value="InterPro"/>
</dbReference>
<dbReference type="GO" id="GO:0046872">
    <property type="term" value="F:metal ion binding"/>
    <property type="evidence" value="ECO:0007669"/>
    <property type="project" value="UniProtKB-KW"/>
</dbReference>
<dbReference type="CDD" id="cd01310">
    <property type="entry name" value="TatD_DNAse"/>
    <property type="match status" value="1"/>
</dbReference>
<dbReference type="FunFam" id="3.20.20.140:FF:000005">
    <property type="entry name" value="TatD family hydrolase"/>
    <property type="match status" value="1"/>
</dbReference>
<dbReference type="Gene3D" id="3.20.20.140">
    <property type="entry name" value="Metal-dependent hydrolases"/>
    <property type="match status" value="1"/>
</dbReference>
<dbReference type="InterPro" id="IPR018228">
    <property type="entry name" value="DNase_TatD-rel_CS"/>
</dbReference>
<dbReference type="InterPro" id="IPR032466">
    <property type="entry name" value="Metal_Hydrolase"/>
</dbReference>
<dbReference type="InterPro" id="IPR001130">
    <property type="entry name" value="TatD-like"/>
</dbReference>
<dbReference type="InterPro" id="IPR015991">
    <property type="entry name" value="TatD/YcfH-like"/>
</dbReference>
<dbReference type="NCBIfam" id="TIGR00010">
    <property type="entry name" value="YchF/TatD family DNA exonuclease"/>
    <property type="match status" value="1"/>
</dbReference>
<dbReference type="PANTHER" id="PTHR46124">
    <property type="entry name" value="D-AMINOACYL-TRNA DEACYLASE"/>
    <property type="match status" value="1"/>
</dbReference>
<dbReference type="PANTHER" id="PTHR46124:SF2">
    <property type="entry name" value="D-AMINOACYL-TRNA DEACYLASE"/>
    <property type="match status" value="1"/>
</dbReference>
<dbReference type="Pfam" id="PF01026">
    <property type="entry name" value="TatD_DNase"/>
    <property type="match status" value="1"/>
</dbReference>
<dbReference type="PIRSF" id="PIRSF005902">
    <property type="entry name" value="DNase_TatD"/>
    <property type="match status" value="1"/>
</dbReference>
<dbReference type="SUPFAM" id="SSF51556">
    <property type="entry name" value="Metallo-dependent hydrolases"/>
    <property type="match status" value="1"/>
</dbReference>
<dbReference type="PROSITE" id="PS01137">
    <property type="entry name" value="TATD_1"/>
    <property type="match status" value="1"/>
</dbReference>
<dbReference type="PROSITE" id="PS01091">
    <property type="entry name" value="TATD_3"/>
    <property type="match status" value="1"/>
</dbReference>
<sequence>MFLIDSHCHLDLLNYNKIHTGIQDVLNKSKKKHVNVILTVSTSIENFCYLLKFIKGNRNVLLSCGIHPHYIPENKNEILKLKKYSNNEKVVAIGETGLDYYRNNDNKKLQQILFREHIKTSITLKKPLLIHTRNSINDTINILKEENSKQCIGVLHSFTEDMHSARILLNMGFYISFSGIVTFKNSKIVHETAKFVPIDRILIETDSPYLSPVPYRGIENQPAYLYDTMLYIAQLKNMSPECFAIQTTKNFLKLFNLPSYFTNMS</sequence>
<keyword id="KW-0378">Hydrolase</keyword>
<keyword id="KW-0479">Metal-binding</keyword>
<keyword id="KW-1185">Reference proteome</keyword>
<protein>
    <recommendedName>
        <fullName evidence="2">Uncharacterized metal-dependent hydrolase bbp_325</fullName>
        <ecNumber evidence="2">3.1.-.-</ecNumber>
    </recommendedName>
</protein>